<feature type="chain" id="PRO_1000120402" description="GMP synthase [glutamine-hydrolyzing]">
    <location>
        <begin position="1"/>
        <end position="525"/>
    </location>
</feature>
<feature type="domain" description="Glutamine amidotransferase type-1" evidence="1">
    <location>
        <begin position="8"/>
        <end position="207"/>
    </location>
</feature>
<feature type="domain" description="GMPS ATP-PPase" evidence="1">
    <location>
        <begin position="208"/>
        <end position="400"/>
    </location>
</feature>
<feature type="active site" description="Nucleophile" evidence="1">
    <location>
        <position position="85"/>
    </location>
</feature>
<feature type="active site" evidence="1">
    <location>
        <position position="181"/>
    </location>
</feature>
<feature type="active site" evidence="1">
    <location>
        <position position="183"/>
    </location>
</feature>
<feature type="binding site" evidence="1">
    <location>
        <begin position="235"/>
        <end position="241"/>
    </location>
    <ligand>
        <name>ATP</name>
        <dbReference type="ChEBI" id="CHEBI:30616"/>
    </ligand>
</feature>
<keyword id="KW-0067">ATP-binding</keyword>
<keyword id="KW-0315">Glutamine amidotransferase</keyword>
<keyword id="KW-0332">GMP biosynthesis</keyword>
<keyword id="KW-0436">Ligase</keyword>
<keyword id="KW-0547">Nucleotide-binding</keyword>
<keyword id="KW-0658">Purine biosynthesis</keyword>
<keyword id="KW-1185">Reference proteome</keyword>
<comment type="function">
    <text evidence="1">Catalyzes the synthesis of GMP from XMP.</text>
</comment>
<comment type="catalytic activity">
    <reaction evidence="1">
        <text>XMP + L-glutamine + ATP + H2O = GMP + L-glutamate + AMP + diphosphate + 2 H(+)</text>
        <dbReference type="Rhea" id="RHEA:11680"/>
        <dbReference type="ChEBI" id="CHEBI:15377"/>
        <dbReference type="ChEBI" id="CHEBI:15378"/>
        <dbReference type="ChEBI" id="CHEBI:29985"/>
        <dbReference type="ChEBI" id="CHEBI:30616"/>
        <dbReference type="ChEBI" id="CHEBI:33019"/>
        <dbReference type="ChEBI" id="CHEBI:57464"/>
        <dbReference type="ChEBI" id="CHEBI:58115"/>
        <dbReference type="ChEBI" id="CHEBI:58359"/>
        <dbReference type="ChEBI" id="CHEBI:456215"/>
        <dbReference type="EC" id="6.3.5.2"/>
    </reaction>
</comment>
<comment type="pathway">
    <text evidence="1">Purine metabolism; GMP biosynthesis; GMP from XMP (L-Gln route): step 1/1.</text>
</comment>
<comment type="subunit">
    <text evidence="1">Homodimer.</text>
</comment>
<organism>
    <name type="scientific">Shewanella frigidimarina (strain NCIMB 400)</name>
    <dbReference type="NCBI Taxonomy" id="318167"/>
    <lineage>
        <taxon>Bacteria</taxon>
        <taxon>Pseudomonadati</taxon>
        <taxon>Pseudomonadota</taxon>
        <taxon>Gammaproteobacteria</taxon>
        <taxon>Alteromonadales</taxon>
        <taxon>Shewanellaceae</taxon>
        <taxon>Shewanella</taxon>
    </lineage>
</organism>
<proteinExistence type="inferred from homology"/>
<sequence length="525" mass="57964">MSNIHDHKILILDFGSQYTQLIARRIREIGVYCELWAWDVSEAQIREFAPNGIILAGGPESVTADNSPRAPEYVFNAGVPVLGICYGMQTMSEQLGGKVIQGVGEGEFGYAQIELQTTSALFKSIEDAVSAEGKPLLDVWMSHGDKVSAIPDGFVTVAKTATCPFAAMANEEKGFYGVQFHPEVTHTRQGQRMLEHFALDICGCKANWKPSSIIEDAIERLKKQIGDDEVILGLSGGVDSSVVAMLLHRAIGDKLTCVFVDNGLLRLNEAEQVLEMFGDHFGLNIVHVDAENRFLDAMAGEAEPEAKRKIIGRVFVEIFDEESKKCANAKWLAQGTIYPDVIESAGSATGKAHVIKSHHNVGGLPADMKMGLVEPLRELFKDEVRKIGLELGLPYNMLYRHPFPGPGLGVRVLGEVKKEYCDLLRSADAIFIEELHKADLYNKVSQAFTVFLPVRSVGVMGDGRKYDWVVSLRAVETIDFMTAHWAHLPYDFLGRVSNRIINEVDGISRVVYDISGKPPATIEWE</sequence>
<dbReference type="EC" id="6.3.5.2" evidence="1"/>
<dbReference type="EMBL" id="CP000447">
    <property type="protein sequence ID" value="ABI70991.1"/>
    <property type="molecule type" value="Genomic_DNA"/>
</dbReference>
<dbReference type="RefSeq" id="WP_011636612.1">
    <property type="nucleotide sequence ID" value="NC_008345.1"/>
</dbReference>
<dbReference type="SMR" id="Q085S4"/>
<dbReference type="STRING" id="318167.Sfri_1138"/>
<dbReference type="MEROPS" id="C26.A07"/>
<dbReference type="KEGG" id="sfr:Sfri_1138"/>
<dbReference type="eggNOG" id="COG0518">
    <property type="taxonomic scope" value="Bacteria"/>
</dbReference>
<dbReference type="eggNOG" id="COG0519">
    <property type="taxonomic scope" value="Bacteria"/>
</dbReference>
<dbReference type="HOGENOM" id="CLU_014340_0_5_6"/>
<dbReference type="OrthoDB" id="9802219at2"/>
<dbReference type="UniPathway" id="UPA00189">
    <property type="reaction ID" value="UER00296"/>
</dbReference>
<dbReference type="Proteomes" id="UP000000684">
    <property type="component" value="Chromosome"/>
</dbReference>
<dbReference type="GO" id="GO:0005829">
    <property type="term" value="C:cytosol"/>
    <property type="evidence" value="ECO:0007669"/>
    <property type="project" value="TreeGrafter"/>
</dbReference>
<dbReference type="GO" id="GO:0005524">
    <property type="term" value="F:ATP binding"/>
    <property type="evidence" value="ECO:0007669"/>
    <property type="project" value="UniProtKB-UniRule"/>
</dbReference>
<dbReference type="GO" id="GO:0003921">
    <property type="term" value="F:GMP synthase activity"/>
    <property type="evidence" value="ECO:0007669"/>
    <property type="project" value="InterPro"/>
</dbReference>
<dbReference type="CDD" id="cd01742">
    <property type="entry name" value="GATase1_GMP_Synthase"/>
    <property type="match status" value="1"/>
</dbReference>
<dbReference type="CDD" id="cd01997">
    <property type="entry name" value="GMP_synthase_C"/>
    <property type="match status" value="1"/>
</dbReference>
<dbReference type="FunFam" id="3.30.300.10:FF:000002">
    <property type="entry name" value="GMP synthase [glutamine-hydrolyzing]"/>
    <property type="match status" value="1"/>
</dbReference>
<dbReference type="FunFam" id="3.40.50.620:FF:000001">
    <property type="entry name" value="GMP synthase [glutamine-hydrolyzing]"/>
    <property type="match status" value="1"/>
</dbReference>
<dbReference type="FunFam" id="3.40.50.880:FF:000001">
    <property type="entry name" value="GMP synthase [glutamine-hydrolyzing]"/>
    <property type="match status" value="1"/>
</dbReference>
<dbReference type="Gene3D" id="3.30.300.10">
    <property type="match status" value="1"/>
</dbReference>
<dbReference type="Gene3D" id="3.40.50.880">
    <property type="match status" value="1"/>
</dbReference>
<dbReference type="Gene3D" id="3.40.50.620">
    <property type="entry name" value="HUPs"/>
    <property type="match status" value="1"/>
</dbReference>
<dbReference type="HAMAP" id="MF_00344">
    <property type="entry name" value="GMP_synthase"/>
    <property type="match status" value="1"/>
</dbReference>
<dbReference type="InterPro" id="IPR029062">
    <property type="entry name" value="Class_I_gatase-like"/>
</dbReference>
<dbReference type="InterPro" id="IPR017926">
    <property type="entry name" value="GATASE"/>
</dbReference>
<dbReference type="InterPro" id="IPR001674">
    <property type="entry name" value="GMP_synth_C"/>
</dbReference>
<dbReference type="InterPro" id="IPR004739">
    <property type="entry name" value="GMP_synth_GATase"/>
</dbReference>
<dbReference type="InterPro" id="IPR022955">
    <property type="entry name" value="GMP_synthase"/>
</dbReference>
<dbReference type="InterPro" id="IPR025777">
    <property type="entry name" value="GMPS_ATP_PPase_dom"/>
</dbReference>
<dbReference type="InterPro" id="IPR022310">
    <property type="entry name" value="NAD/GMP_synthase"/>
</dbReference>
<dbReference type="InterPro" id="IPR014729">
    <property type="entry name" value="Rossmann-like_a/b/a_fold"/>
</dbReference>
<dbReference type="NCBIfam" id="TIGR00884">
    <property type="entry name" value="guaA_Cterm"/>
    <property type="match status" value="1"/>
</dbReference>
<dbReference type="NCBIfam" id="TIGR00888">
    <property type="entry name" value="guaA_Nterm"/>
    <property type="match status" value="1"/>
</dbReference>
<dbReference type="NCBIfam" id="NF000848">
    <property type="entry name" value="PRK00074.1"/>
    <property type="match status" value="1"/>
</dbReference>
<dbReference type="PANTHER" id="PTHR11922:SF2">
    <property type="entry name" value="GMP SYNTHASE [GLUTAMINE-HYDROLYZING]"/>
    <property type="match status" value="1"/>
</dbReference>
<dbReference type="PANTHER" id="PTHR11922">
    <property type="entry name" value="GMP SYNTHASE-RELATED"/>
    <property type="match status" value="1"/>
</dbReference>
<dbReference type="Pfam" id="PF00117">
    <property type="entry name" value="GATase"/>
    <property type="match status" value="1"/>
</dbReference>
<dbReference type="Pfam" id="PF00958">
    <property type="entry name" value="GMP_synt_C"/>
    <property type="match status" value="1"/>
</dbReference>
<dbReference type="Pfam" id="PF02540">
    <property type="entry name" value="NAD_synthase"/>
    <property type="match status" value="1"/>
</dbReference>
<dbReference type="PRINTS" id="PR00097">
    <property type="entry name" value="ANTSNTHASEII"/>
</dbReference>
<dbReference type="PRINTS" id="PR00099">
    <property type="entry name" value="CPSGATASE"/>
</dbReference>
<dbReference type="PRINTS" id="PR00096">
    <property type="entry name" value="GATASE"/>
</dbReference>
<dbReference type="SUPFAM" id="SSF52402">
    <property type="entry name" value="Adenine nucleotide alpha hydrolases-like"/>
    <property type="match status" value="1"/>
</dbReference>
<dbReference type="SUPFAM" id="SSF52317">
    <property type="entry name" value="Class I glutamine amidotransferase-like"/>
    <property type="match status" value="1"/>
</dbReference>
<dbReference type="SUPFAM" id="SSF54810">
    <property type="entry name" value="GMP synthetase C-terminal dimerisation domain"/>
    <property type="match status" value="1"/>
</dbReference>
<dbReference type="PROSITE" id="PS51273">
    <property type="entry name" value="GATASE_TYPE_1"/>
    <property type="match status" value="1"/>
</dbReference>
<dbReference type="PROSITE" id="PS51553">
    <property type="entry name" value="GMPS_ATP_PPASE"/>
    <property type="match status" value="1"/>
</dbReference>
<accession>Q085S4</accession>
<reference key="1">
    <citation type="submission" date="2006-08" db="EMBL/GenBank/DDBJ databases">
        <title>Complete sequence of Shewanella frigidimarina NCIMB 400.</title>
        <authorList>
            <consortium name="US DOE Joint Genome Institute"/>
            <person name="Copeland A."/>
            <person name="Lucas S."/>
            <person name="Lapidus A."/>
            <person name="Barry K."/>
            <person name="Detter J.C."/>
            <person name="Glavina del Rio T."/>
            <person name="Hammon N."/>
            <person name="Israni S."/>
            <person name="Dalin E."/>
            <person name="Tice H."/>
            <person name="Pitluck S."/>
            <person name="Fredrickson J.K."/>
            <person name="Kolker E."/>
            <person name="McCuel L.A."/>
            <person name="DiChristina T."/>
            <person name="Nealson K.H."/>
            <person name="Newman D."/>
            <person name="Tiedje J.M."/>
            <person name="Zhou J."/>
            <person name="Romine M.F."/>
            <person name="Culley D.E."/>
            <person name="Serres M."/>
            <person name="Chertkov O."/>
            <person name="Brettin T."/>
            <person name="Bruce D."/>
            <person name="Han C."/>
            <person name="Tapia R."/>
            <person name="Gilna P."/>
            <person name="Schmutz J."/>
            <person name="Larimer F."/>
            <person name="Land M."/>
            <person name="Hauser L."/>
            <person name="Kyrpides N."/>
            <person name="Mikhailova N."/>
            <person name="Richardson P."/>
        </authorList>
    </citation>
    <scope>NUCLEOTIDE SEQUENCE [LARGE SCALE GENOMIC DNA]</scope>
    <source>
        <strain>NCIMB 400</strain>
    </source>
</reference>
<evidence type="ECO:0000255" key="1">
    <source>
        <dbReference type="HAMAP-Rule" id="MF_00344"/>
    </source>
</evidence>
<name>GUAA_SHEFN</name>
<gene>
    <name evidence="1" type="primary">guaA</name>
    <name type="ordered locus">Sfri_1138</name>
</gene>
<protein>
    <recommendedName>
        <fullName evidence="1">GMP synthase [glutamine-hydrolyzing]</fullName>
        <ecNumber evidence="1">6.3.5.2</ecNumber>
    </recommendedName>
    <alternativeName>
        <fullName evidence="1">GMP synthetase</fullName>
    </alternativeName>
    <alternativeName>
        <fullName evidence="1">Glutamine amidotransferase</fullName>
    </alternativeName>
</protein>